<feature type="chain" id="PRO_0000260394" description="Ankyrin repeat, SAM and basic leucine zipper domain-containing protein 1">
    <location>
        <begin position="1"/>
        <end position="475"/>
    </location>
</feature>
<feature type="repeat" description="ANK 1">
    <location>
        <begin position="45"/>
        <end position="74"/>
    </location>
</feature>
<feature type="repeat" description="ANK 2">
    <location>
        <begin position="78"/>
        <end position="107"/>
    </location>
</feature>
<feature type="repeat" description="ANK 3">
    <location>
        <begin position="110"/>
        <end position="144"/>
    </location>
</feature>
<feature type="repeat" description="ANK 4">
    <location>
        <begin position="148"/>
        <end position="177"/>
    </location>
</feature>
<feature type="repeat" description="ANK 5">
    <location>
        <begin position="181"/>
        <end position="210"/>
    </location>
</feature>
<feature type="repeat" description="ANK 6">
    <location>
        <begin position="214"/>
        <end position="243"/>
    </location>
</feature>
<feature type="domain" description="SAM">
    <location>
        <begin position="272"/>
        <end position="334"/>
    </location>
</feature>
<feature type="region of interest" description="Disordered" evidence="3">
    <location>
        <begin position="1"/>
        <end position="24"/>
    </location>
</feature>
<feature type="modified residue" description="Phosphoserine" evidence="2">
    <location>
        <position position="17"/>
    </location>
</feature>
<feature type="modified residue" description="Phosphoserine" evidence="2">
    <location>
        <position position="18"/>
    </location>
</feature>
<feature type="modified residue" description="Phosphoserine" evidence="2">
    <location>
        <position position="20"/>
    </location>
</feature>
<sequence>MAAGTVRGLAVAGGGESSESEDDGWEIGYLDRSAQKLKGPLLPEEKNETFKKALTTGDISLVQELLDSGLSVDSSFRYGWTPLMYAASVSNVELVRVLLDRGANASFDKDKQTILITACSARGSEEQILKCVELLLSRNADPNVACRRLMTPIMYAARDGHPQVVALLVAHGAEVNAQDENGYTALTWAARQGHKNVVLKLLELGANKMLQTKDGKTPSEIAKRNKHLEIFNFLSLTLNPLEGKLQQLTKEETICKLLTTDSDKEKDHIFSSYTAFGDLEIFLHGLGLEHMTDLLKERDITLRHLLTMRKDEFTKNGITNRDQQKILAALKELEVEEIKFGELPEVAKLEISGDEFLNFLLKLNKQCGHLITAVQNIISELPVNSHKIVLEWSSPQNFTSVCEELVSNVEDLSEEVCKLKDLIQKLQNERENDPTHIPLMEEVSTWNSRILKRTAVTVCGFGFLLFICKLTFQRK</sequence>
<reference key="1">
    <citation type="submission" date="2006-09" db="EMBL/GenBank/DDBJ databases">
        <title>NISC comparative sequencing initiative.</title>
        <authorList>
            <person name="Antonellis A."/>
            <person name="Ayele K."/>
            <person name="Benjamin B."/>
            <person name="Blakesley R.W."/>
            <person name="Boakye A."/>
            <person name="Bouffard G.G."/>
            <person name="Brinkley C."/>
            <person name="Brooks S."/>
            <person name="Chu G."/>
            <person name="Coleman H."/>
            <person name="Engle J."/>
            <person name="Gestole M."/>
            <person name="Greene A."/>
            <person name="Guan X."/>
            <person name="Gupta J."/>
            <person name="Haghighi P."/>
            <person name="Han J."/>
            <person name="Hansen N."/>
            <person name="Ho S.-L."/>
            <person name="Hu P."/>
            <person name="Hunter G."/>
            <person name="Hurle B."/>
            <person name="Idol J.R."/>
            <person name="Kwong P."/>
            <person name="Laric P."/>
            <person name="Larson S."/>
            <person name="Lee-Lin S.-Q."/>
            <person name="Legaspi R."/>
            <person name="Madden M."/>
            <person name="Maduro Q.L."/>
            <person name="Maduro V.B."/>
            <person name="Margulies E.H."/>
            <person name="Masiello C."/>
            <person name="Maskeri B."/>
            <person name="McDowell J."/>
            <person name="Mojidi H.A."/>
            <person name="Mullikin J.C."/>
            <person name="Oestreicher J.S."/>
            <person name="Park M."/>
            <person name="Portnoy M.E."/>
            <person name="Prasad A."/>
            <person name="Puri O."/>
            <person name="Reddix-Dugue N."/>
            <person name="Schandler K."/>
            <person name="Schueler M.G."/>
            <person name="Sison C."/>
            <person name="Stantripop S."/>
            <person name="Stephen E."/>
            <person name="Taye A."/>
            <person name="Thomas J.W."/>
            <person name="Thomas P.J."/>
            <person name="Tsipouri V."/>
            <person name="Ung L."/>
            <person name="Vogt J.L."/>
            <person name="Wetherby K.D."/>
            <person name="Young A."/>
            <person name="Green E.D."/>
        </authorList>
    </citation>
    <scope>NUCLEOTIDE SEQUENCE [LARGE SCALE GENOMIC DNA]</scope>
</reference>
<accession>Q07E30</accession>
<evidence type="ECO:0000250" key="1"/>
<evidence type="ECO:0000250" key="2">
    <source>
        <dbReference type="UniProtKB" id="Q8VD46"/>
    </source>
</evidence>
<evidence type="ECO:0000256" key="3">
    <source>
        <dbReference type="SAM" id="MobiDB-lite"/>
    </source>
</evidence>
<dbReference type="EMBL" id="DP000182">
    <property type="protein sequence ID" value="ABI93646.1"/>
    <property type="molecule type" value="Genomic_DNA"/>
</dbReference>
<dbReference type="RefSeq" id="XP_058580484.1">
    <property type="nucleotide sequence ID" value="XM_058724501.1"/>
</dbReference>
<dbReference type="SMR" id="Q07E30"/>
<dbReference type="GeneID" id="131509089"/>
<dbReference type="GO" id="GO:0071546">
    <property type="term" value="C:pi-body"/>
    <property type="evidence" value="ECO:0000250"/>
    <property type="project" value="UniProtKB"/>
</dbReference>
<dbReference type="GO" id="GO:0030154">
    <property type="term" value="P:cell differentiation"/>
    <property type="evidence" value="ECO:0007669"/>
    <property type="project" value="UniProtKB-KW"/>
</dbReference>
<dbReference type="GO" id="GO:0007140">
    <property type="term" value="P:male meiotic nuclear division"/>
    <property type="evidence" value="ECO:0000250"/>
    <property type="project" value="UniProtKB"/>
</dbReference>
<dbReference type="GO" id="GO:0031047">
    <property type="term" value="P:regulatory ncRNA-mediated gene silencing"/>
    <property type="evidence" value="ECO:0007669"/>
    <property type="project" value="UniProtKB-KW"/>
</dbReference>
<dbReference type="GO" id="GO:0007283">
    <property type="term" value="P:spermatogenesis"/>
    <property type="evidence" value="ECO:0000250"/>
    <property type="project" value="UniProtKB"/>
</dbReference>
<dbReference type="GO" id="GO:0010526">
    <property type="term" value="P:transposable element silencing"/>
    <property type="evidence" value="ECO:0000250"/>
    <property type="project" value="UniProtKB"/>
</dbReference>
<dbReference type="CDD" id="cd09521">
    <property type="entry name" value="SAM_ASZ1"/>
    <property type="match status" value="1"/>
</dbReference>
<dbReference type="FunFam" id="1.25.40.20:FF:000192">
    <property type="entry name" value="Ankyrin repeat, SAM and basic leucine zipper domain-containing 1"/>
    <property type="match status" value="1"/>
</dbReference>
<dbReference type="FunFam" id="1.10.150.50:FF:000060">
    <property type="entry name" value="Ankyrin repeat, SAM and basic leucine zipper domain-containing protein 1"/>
    <property type="match status" value="1"/>
</dbReference>
<dbReference type="Gene3D" id="1.25.40.20">
    <property type="entry name" value="Ankyrin repeat-containing domain"/>
    <property type="match status" value="1"/>
</dbReference>
<dbReference type="Gene3D" id="1.10.150.50">
    <property type="entry name" value="Transcription Factor, Ets-1"/>
    <property type="match status" value="1"/>
</dbReference>
<dbReference type="InterPro" id="IPR002110">
    <property type="entry name" value="Ankyrin_rpt"/>
</dbReference>
<dbReference type="InterPro" id="IPR036770">
    <property type="entry name" value="Ankyrin_rpt-contain_sf"/>
</dbReference>
<dbReference type="InterPro" id="IPR042650">
    <property type="entry name" value="Asz1_SAM"/>
</dbReference>
<dbReference type="InterPro" id="IPR001660">
    <property type="entry name" value="SAM"/>
</dbReference>
<dbReference type="InterPro" id="IPR013761">
    <property type="entry name" value="SAM/pointed_sf"/>
</dbReference>
<dbReference type="PANTHER" id="PTHR24157">
    <property type="entry name" value="ANKYRIN REPEAT, SAM AND BASIC LEUCINE ZIPPER DOMAIN-CONTAINING PROTEIN 1"/>
    <property type="match status" value="1"/>
</dbReference>
<dbReference type="PANTHER" id="PTHR24157:SF3">
    <property type="entry name" value="ANKYRIN REPEAT, SAM AND BASIC LEUCINE ZIPPER DOMAIN-CONTAINING PROTEIN 1"/>
    <property type="match status" value="1"/>
</dbReference>
<dbReference type="Pfam" id="PF12796">
    <property type="entry name" value="Ank_2"/>
    <property type="match status" value="1"/>
</dbReference>
<dbReference type="Pfam" id="PF13637">
    <property type="entry name" value="Ank_4"/>
    <property type="match status" value="1"/>
</dbReference>
<dbReference type="Pfam" id="PF07647">
    <property type="entry name" value="SAM_2"/>
    <property type="match status" value="1"/>
</dbReference>
<dbReference type="PRINTS" id="PR01415">
    <property type="entry name" value="ANKYRIN"/>
</dbReference>
<dbReference type="SMART" id="SM00248">
    <property type="entry name" value="ANK"/>
    <property type="match status" value="5"/>
</dbReference>
<dbReference type="SUPFAM" id="SSF48403">
    <property type="entry name" value="Ankyrin repeat"/>
    <property type="match status" value="1"/>
</dbReference>
<dbReference type="SUPFAM" id="SSF140860">
    <property type="entry name" value="Pseudo ankyrin repeat-like"/>
    <property type="match status" value="1"/>
</dbReference>
<dbReference type="SUPFAM" id="SSF47769">
    <property type="entry name" value="SAM/Pointed domain"/>
    <property type="match status" value="1"/>
</dbReference>
<dbReference type="PROSITE" id="PS50297">
    <property type="entry name" value="ANK_REP_REGION"/>
    <property type="match status" value="1"/>
</dbReference>
<dbReference type="PROSITE" id="PS50088">
    <property type="entry name" value="ANK_REPEAT"/>
    <property type="match status" value="3"/>
</dbReference>
<keyword id="KW-0040">ANK repeat</keyword>
<keyword id="KW-0963">Cytoplasm</keyword>
<keyword id="KW-0217">Developmental protein</keyword>
<keyword id="KW-0221">Differentiation</keyword>
<keyword id="KW-0469">Meiosis</keyword>
<keyword id="KW-0597">Phosphoprotein</keyword>
<keyword id="KW-0677">Repeat</keyword>
<keyword id="KW-0943">RNA-mediated gene silencing</keyword>
<keyword id="KW-0744">Spermatogenesis</keyword>
<protein>
    <recommendedName>
        <fullName>Ankyrin repeat, SAM and basic leucine zipper domain-containing protein 1</fullName>
    </recommendedName>
    <alternativeName>
        <fullName>Germ cell-specific ankyrin, SAM and basic leucine zipper domain-containing protein</fullName>
    </alternativeName>
</protein>
<comment type="function">
    <text evidence="1">Plays a central role during spermatogenesis by repressing transposable elements and preventing their mobilization, which is essential for the germline integrity. Acts via the piRNA metabolic process, which mediates the repression of transposable elements during meiosis by forming complexes composed of piRNAs and Piwi proteins and governs the methylation and subsequent repression of transposons. Its association with pi-bodies suggests a participation in the primary piRNAs metabolic process. Required prior to the pachytene stage to facilitate the production of multiple types of piRNAs, including those associated with repeats involved in the regulation of retrotransposons. May act by mediating protein-protein interactions during germ cell maturation (By similarity).</text>
</comment>
<comment type="subunit">
    <text evidence="1">Interacts with DDX4, PIWIL1, RANBP9 and TDRD1.</text>
</comment>
<comment type="subcellular location">
    <subcellularLocation>
        <location evidence="1">Cytoplasm</location>
    </subcellularLocation>
    <text evidence="1">Component of the meiotic nuage, also named P granule, a germ-cell-specific organelle required to repress transposon activity during meiosis. Specifically localizes to pi-bodies, a subset of the nuage which contains primary piRNAs (By similarity).</text>
</comment>
<organism>
    <name type="scientific">Neofelis nebulosa</name>
    <name type="common">Clouded leopard</name>
    <dbReference type="NCBI Taxonomy" id="61452"/>
    <lineage>
        <taxon>Eukaryota</taxon>
        <taxon>Metazoa</taxon>
        <taxon>Chordata</taxon>
        <taxon>Craniata</taxon>
        <taxon>Vertebrata</taxon>
        <taxon>Euteleostomi</taxon>
        <taxon>Mammalia</taxon>
        <taxon>Eutheria</taxon>
        <taxon>Laurasiatheria</taxon>
        <taxon>Carnivora</taxon>
        <taxon>Feliformia</taxon>
        <taxon>Felidae</taxon>
        <taxon>Pantherinae</taxon>
        <taxon>Neofelis</taxon>
    </lineage>
</organism>
<name>ASZ1_NEONE</name>
<proteinExistence type="inferred from homology"/>
<gene>
    <name type="primary">ASZ1</name>
    <name type="synonym">GASZ</name>
</gene>